<proteinExistence type="inferred from homology"/>
<accession>A0L3M5</accession>
<keyword id="KW-0067">ATP-binding</keyword>
<keyword id="KW-0963">Cytoplasm</keyword>
<keyword id="KW-0436">Ligase</keyword>
<keyword id="KW-0547">Nucleotide-binding</keyword>
<keyword id="KW-0566">Pantothenate biosynthesis</keyword>
<keyword id="KW-1185">Reference proteome</keyword>
<feature type="chain" id="PRO_0000305477" description="Pantothenate synthetase">
    <location>
        <begin position="1"/>
        <end position="289"/>
    </location>
</feature>
<feature type="active site" description="Proton donor" evidence="1">
    <location>
        <position position="35"/>
    </location>
</feature>
<feature type="binding site" evidence="1">
    <location>
        <begin position="28"/>
        <end position="35"/>
    </location>
    <ligand>
        <name>ATP</name>
        <dbReference type="ChEBI" id="CHEBI:30616"/>
    </ligand>
</feature>
<feature type="binding site" evidence="1">
    <location>
        <position position="59"/>
    </location>
    <ligand>
        <name>(R)-pantoate</name>
        <dbReference type="ChEBI" id="CHEBI:15980"/>
    </ligand>
</feature>
<feature type="binding site" evidence="1">
    <location>
        <position position="59"/>
    </location>
    <ligand>
        <name>beta-alanine</name>
        <dbReference type="ChEBI" id="CHEBI:57966"/>
    </ligand>
</feature>
<feature type="binding site" evidence="1">
    <location>
        <begin position="147"/>
        <end position="150"/>
    </location>
    <ligand>
        <name>ATP</name>
        <dbReference type="ChEBI" id="CHEBI:30616"/>
    </ligand>
</feature>
<feature type="binding site" evidence="1">
    <location>
        <position position="153"/>
    </location>
    <ligand>
        <name>(R)-pantoate</name>
        <dbReference type="ChEBI" id="CHEBI:15980"/>
    </ligand>
</feature>
<feature type="binding site" evidence="1">
    <location>
        <position position="176"/>
    </location>
    <ligand>
        <name>ATP</name>
        <dbReference type="ChEBI" id="CHEBI:30616"/>
    </ligand>
</feature>
<feature type="binding site" evidence="1">
    <location>
        <begin position="184"/>
        <end position="187"/>
    </location>
    <ligand>
        <name>ATP</name>
        <dbReference type="ChEBI" id="CHEBI:30616"/>
    </ligand>
</feature>
<gene>
    <name evidence="1" type="primary">panC</name>
    <name type="ordered locus">Mmc1_0039</name>
</gene>
<name>PANC_MAGMM</name>
<comment type="function">
    <text evidence="1">Catalyzes the condensation of pantoate with beta-alanine in an ATP-dependent reaction via a pantoyl-adenylate intermediate.</text>
</comment>
<comment type="catalytic activity">
    <reaction evidence="1">
        <text>(R)-pantoate + beta-alanine + ATP = (R)-pantothenate + AMP + diphosphate + H(+)</text>
        <dbReference type="Rhea" id="RHEA:10912"/>
        <dbReference type="ChEBI" id="CHEBI:15378"/>
        <dbReference type="ChEBI" id="CHEBI:15980"/>
        <dbReference type="ChEBI" id="CHEBI:29032"/>
        <dbReference type="ChEBI" id="CHEBI:30616"/>
        <dbReference type="ChEBI" id="CHEBI:33019"/>
        <dbReference type="ChEBI" id="CHEBI:57966"/>
        <dbReference type="ChEBI" id="CHEBI:456215"/>
        <dbReference type="EC" id="6.3.2.1"/>
    </reaction>
</comment>
<comment type="pathway">
    <text evidence="1">Cofactor biosynthesis; (R)-pantothenate biosynthesis; (R)-pantothenate from (R)-pantoate and beta-alanine: step 1/1.</text>
</comment>
<comment type="subunit">
    <text evidence="1">Homodimer.</text>
</comment>
<comment type="subcellular location">
    <subcellularLocation>
        <location evidence="1">Cytoplasm</location>
    </subcellularLocation>
</comment>
<comment type="miscellaneous">
    <text evidence="1">The reaction proceeds by a bi uni uni bi ping pong mechanism.</text>
</comment>
<comment type="similarity">
    <text evidence="1">Belongs to the pantothenate synthetase family.</text>
</comment>
<organism>
    <name type="scientific">Magnetococcus marinus (strain ATCC BAA-1437 / JCM 17883 / MC-1)</name>
    <dbReference type="NCBI Taxonomy" id="156889"/>
    <lineage>
        <taxon>Bacteria</taxon>
        <taxon>Pseudomonadati</taxon>
        <taxon>Pseudomonadota</taxon>
        <taxon>Alphaproteobacteria</taxon>
        <taxon>Magnetococcales</taxon>
        <taxon>Magnetococcaceae</taxon>
        <taxon>Magnetococcus</taxon>
    </lineage>
</organism>
<sequence>MESLQDRAALLAWRKRQGHQNIGFVPTMGCLHEGHLTLLREARQRCEQVVVSIFVNPTQFGPNEDFDLYPRTFEADWALLEAEGCDALFHPTVAAIYPPENPNLTHVTLPALAGMLCGAVRPGHFDGVATVVTLLLNLVRPTSAFFGLKDYQQFTVLRSMVQDLAMPVEVIGIPTVREPDGLAMSSRNRYLDAPARAQAVALSQGLNRAYHAYQEGLHDATALAHLVEQTLRQAGIARIDYVAVRDALTLQPWQGKGAPVVLIAAHVGAARLIDNLVLGAQPIPSVTQE</sequence>
<dbReference type="EC" id="6.3.2.1" evidence="1"/>
<dbReference type="EMBL" id="CP000471">
    <property type="protein sequence ID" value="ABK42568.1"/>
    <property type="molecule type" value="Genomic_DNA"/>
</dbReference>
<dbReference type="RefSeq" id="WP_011711742.1">
    <property type="nucleotide sequence ID" value="NC_008576.1"/>
</dbReference>
<dbReference type="SMR" id="A0L3M5"/>
<dbReference type="STRING" id="156889.Mmc1_0039"/>
<dbReference type="KEGG" id="mgm:Mmc1_0039"/>
<dbReference type="eggNOG" id="COG0414">
    <property type="taxonomic scope" value="Bacteria"/>
</dbReference>
<dbReference type="HOGENOM" id="CLU_047148_0_0_5"/>
<dbReference type="OrthoDB" id="9773087at2"/>
<dbReference type="UniPathway" id="UPA00028">
    <property type="reaction ID" value="UER00005"/>
</dbReference>
<dbReference type="Proteomes" id="UP000002586">
    <property type="component" value="Chromosome"/>
</dbReference>
<dbReference type="GO" id="GO:0005829">
    <property type="term" value="C:cytosol"/>
    <property type="evidence" value="ECO:0007669"/>
    <property type="project" value="TreeGrafter"/>
</dbReference>
<dbReference type="GO" id="GO:0005524">
    <property type="term" value="F:ATP binding"/>
    <property type="evidence" value="ECO:0007669"/>
    <property type="project" value="UniProtKB-KW"/>
</dbReference>
<dbReference type="GO" id="GO:0004592">
    <property type="term" value="F:pantoate-beta-alanine ligase activity"/>
    <property type="evidence" value="ECO:0007669"/>
    <property type="project" value="UniProtKB-UniRule"/>
</dbReference>
<dbReference type="GO" id="GO:0015940">
    <property type="term" value="P:pantothenate biosynthetic process"/>
    <property type="evidence" value="ECO:0007669"/>
    <property type="project" value="UniProtKB-UniRule"/>
</dbReference>
<dbReference type="CDD" id="cd00560">
    <property type="entry name" value="PanC"/>
    <property type="match status" value="1"/>
</dbReference>
<dbReference type="FunFam" id="3.40.50.620:FF:000013">
    <property type="entry name" value="Pantothenate synthetase"/>
    <property type="match status" value="1"/>
</dbReference>
<dbReference type="Gene3D" id="3.40.50.620">
    <property type="entry name" value="HUPs"/>
    <property type="match status" value="1"/>
</dbReference>
<dbReference type="Gene3D" id="3.30.1300.10">
    <property type="entry name" value="Pantoate-beta-alanine ligase, C-terminal domain"/>
    <property type="match status" value="1"/>
</dbReference>
<dbReference type="HAMAP" id="MF_00158">
    <property type="entry name" value="PanC"/>
    <property type="match status" value="1"/>
</dbReference>
<dbReference type="InterPro" id="IPR004821">
    <property type="entry name" value="Cyt_trans-like"/>
</dbReference>
<dbReference type="InterPro" id="IPR003721">
    <property type="entry name" value="Pantoate_ligase"/>
</dbReference>
<dbReference type="InterPro" id="IPR042176">
    <property type="entry name" value="Pantoate_ligase_C"/>
</dbReference>
<dbReference type="InterPro" id="IPR014729">
    <property type="entry name" value="Rossmann-like_a/b/a_fold"/>
</dbReference>
<dbReference type="NCBIfam" id="TIGR00125">
    <property type="entry name" value="cyt_tran_rel"/>
    <property type="match status" value="1"/>
</dbReference>
<dbReference type="NCBIfam" id="TIGR00018">
    <property type="entry name" value="panC"/>
    <property type="match status" value="1"/>
</dbReference>
<dbReference type="PANTHER" id="PTHR21299">
    <property type="entry name" value="CYTIDYLATE KINASE/PANTOATE-BETA-ALANINE LIGASE"/>
    <property type="match status" value="1"/>
</dbReference>
<dbReference type="PANTHER" id="PTHR21299:SF1">
    <property type="entry name" value="PANTOATE--BETA-ALANINE LIGASE"/>
    <property type="match status" value="1"/>
</dbReference>
<dbReference type="Pfam" id="PF02569">
    <property type="entry name" value="Pantoate_ligase"/>
    <property type="match status" value="1"/>
</dbReference>
<dbReference type="SUPFAM" id="SSF52374">
    <property type="entry name" value="Nucleotidylyl transferase"/>
    <property type="match status" value="1"/>
</dbReference>
<reference key="1">
    <citation type="journal article" date="2009" name="Appl. Environ. Microbiol.">
        <title>Complete genome sequence of the chemolithoautotrophic marine magnetotactic coccus strain MC-1.</title>
        <authorList>
            <person name="Schubbe S."/>
            <person name="Williams T.J."/>
            <person name="Xie G."/>
            <person name="Kiss H.E."/>
            <person name="Brettin T.S."/>
            <person name="Martinez D."/>
            <person name="Ross C.A."/>
            <person name="Schuler D."/>
            <person name="Cox B.L."/>
            <person name="Nealson K.H."/>
            <person name="Bazylinski D.A."/>
        </authorList>
    </citation>
    <scope>NUCLEOTIDE SEQUENCE [LARGE SCALE GENOMIC DNA]</scope>
    <source>
        <strain>ATCC BAA-1437 / JCM 17883 / MC-1</strain>
    </source>
</reference>
<protein>
    <recommendedName>
        <fullName evidence="1">Pantothenate synthetase</fullName>
        <shortName evidence="1">PS</shortName>
        <ecNumber evidence="1">6.3.2.1</ecNumber>
    </recommendedName>
    <alternativeName>
        <fullName evidence="1">Pantoate--beta-alanine ligase</fullName>
    </alternativeName>
    <alternativeName>
        <fullName evidence="1">Pantoate-activating enzyme</fullName>
    </alternativeName>
</protein>
<evidence type="ECO:0000255" key="1">
    <source>
        <dbReference type="HAMAP-Rule" id="MF_00158"/>
    </source>
</evidence>